<gene>
    <name type="primary">ral2</name>
    <name type="ORF">SPBC21.05c</name>
</gene>
<proteinExistence type="evidence at protein level"/>
<feature type="chain" id="PRO_0000119142" description="Protein ral2">
    <location>
        <begin position="1"/>
        <end position="611"/>
    </location>
</feature>
<feature type="repeat" description="Kelch 1">
    <location>
        <begin position="43"/>
        <end position="91"/>
    </location>
</feature>
<feature type="repeat" description="Kelch 2">
    <location>
        <begin position="96"/>
        <end position="149"/>
    </location>
</feature>
<feature type="repeat" description="Kelch 3">
    <location>
        <begin position="175"/>
        <end position="224"/>
    </location>
</feature>
<feature type="modified residue" description="Phosphoserine" evidence="1">
    <location>
        <position position="604"/>
    </location>
</feature>
<keyword id="KW-0880">Kelch repeat</keyword>
<keyword id="KW-0597">Phosphoprotein</keyword>
<keyword id="KW-1185">Reference proteome</keyword>
<keyword id="KW-0677">Repeat</keyword>
<dbReference type="EMBL" id="M30827">
    <property type="protein sequence ID" value="AAA35331.1"/>
    <property type="molecule type" value="Genomic_DNA"/>
</dbReference>
<dbReference type="EMBL" id="CU329671">
    <property type="protein sequence ID" value="CAB36885.1"/>
    <property type="molecule type" value="Genomic_DNA"/>
</dbReference>
<dbReference type="PIR" id="A33827">
    <property type="entry name" value="A33827"/>
</dbReference>
<dbReference type="RefSeq" id="NP_596339.1">
    <property type="nucleotide sequence ID" value="NM_001022260.2"/>
</dbReference>
<dbReference type="BioGRID" id="277280">
    <property type="interactions" value="7"/>
</dbReference>
<dbReference type="FunCoup" id="P15258">
    <property type="interactions" value="137"/>
</dbReference>
<dbReference type="IntAct" id="P15258">
    <property type="interactions" value="1"/>
</dbReference>
<dbReference type="MINT" id="P15258"/>
<dbReference type="STRING" id="284812.P15258"/>
<dbReference type="iPTMnet" id="P15258"/>
<dbReference type="PaxDb" id="4896-SPBC21.05c.1"/>
<dbReference type="EnsemblFungi" id="SPBC21.05c.1">
    <property type="protein sequence ID" value="SPBC21.05c.1:pep"/>
    <property type="gene ID" value="SPBC21.05c"/>
</dbReference>
<dbReference type="GeneID" id="2540760"/>
<dbReference type="KEGG" id="spo:2540760"/>
<dbReference type="PomBase" id="SPBC21.05c">
    <property type="gene designation" value="ral2"/>
</dbReference>
<dbReference type="VEuPathDB" id="FungiDB:SPBC21.05c"/>
<dbReference type="eggNOG" id="KOG0379">
    <property type="taxonomic scope" value="Eukaryota"/>
</dbReference>
<dbReference type="HOGENOM" id="CLU_041328_0_0_1"/>
<dbReference type="InParanoid" id="P15258"/>
<dbReference type="OMA" id="DMADMEF"/>
<dbReference type="PhylomeDB" id="P15258"/>
<dbReference type="Reactome" id="R-SPO-6798695">
    <property type="pathway name" value="Neutrophil degranulation"/>
</dbReference>
<dbReference type="PRO" id="PR:P15258"/>
<dbReference type="Proteomes" id="UP000002485">
    <property type="component" value="Chromosome II"/>
</dbReference>
<dbReference type="GO" id="GO:0005829">
    <property type="term" value="C:cytosol"/>
    <property type="evidence" value="ECO:0000318"/>
    <property type="project" value="GO_Central"/>
</dbReference>
<dbReference type="GO" id="GO:0005783">
    <property type="term" value="C:endoplasmic reticulum"/>
    <property type="evidence" value="ECO:0007005"/>
    <property type="project" value="PomBase"/>
</dbReference>
<dbReference type="GO" id="GO:0004601">
    <property type="term" value="F:peroxidase activity"/>
    <property type="evidence" value="ECO:0000318"/>
    <property type="project" value="GO_Central"/>
</dbReference>
<dbReference type="GO" id="GO:0045454">
    <property type="term" value="P:cell redox homeostasis"/>
    <property type="evidence" value="ECO:0000318"/>
    <property type="project" value="GO_Central"/>
</dbReference>
<dbReference type="GO" id="GO:0031137">
    <property type="term" value="P:regulation of conjugation with cellular fusion"/>
    <property type="evidence" value="ECO:0000315"/>
    <property type="project" value="PomBase"/>
</dbReference>
<dbReference type="GO" id="GO:0032005">
    <property type="term" value="P:signal transduction involved in positive regulation of conjugation with cellular fusion"/>
    <property type="evidence" value="ECO:0000316"/>
    <property type="project" value="PomBase"/>
</dbReference>
<dbReference type="FunFam" id="3.30.710.10:FF:000142">
    <property type="entry name" value="Regulatory protein ral2, variant"/>
    <property type="match status" value="1"/>
</dbReference>
<dbReference type="Gene3D" id="2.120.10.80">
    <property type="entry name" value="Kelch-type beta propeller"/>
    <property type="match status" value="1"/>
</dbReference>
<dbReference type="Gene3D" id="3.30.710.10">
    <property type="entry name" value="Potassium Channel Kv1.1, Chain A"/>
    <property type="match status" value="1"/>
</dbReference>
<dbReference type="InterPro" id="IPR015915">
    <property type="entry name" value="Kelch-typ_b-propeller"/>
</dbReference>
<dbReference type="InterPro" id="IPR011333">
    <property type="entry name" value="SKP1/BTB/POZ_sf"/>
</dbReference>
<dbReference type="PANTHER" id="PTHR43503">
    <property type="entry name" value="MCG48959-RELATED"/>
    <property type="match status" value="1"/>
</dbReference>
<dbReference type="PANTHER" id="PTHR43503:SF2">
    <property type="entry name" value="NEGATIVE REGULATOR OF SPORULATION MDS3-RELATED"/>
    <property type="match status" value="1"/>
</dbReference>
<dbReference type="Pfam" id="PF24681">
    <property type="entry name" value="Kelch_KLHDC2_KLHL20_DRC7"/>
    <property type="match status" value="1"/>
</dbReference>
<dbReference type="SUPFAM" id="SSF117281">
    <property type="entry name" value="Kelch motif"/>
    <property type="match status" value="1"/>
</dbReference>
<comment type="function">
    <text evidence="2">Essential for mating and for recognition of the mating pheromone, and for the determination of cell shape. Implicated in activation of the ras1 protein.</text>
</comment>
<accession>P15258</accession>
<name>RAL2_SCHPO</name>
<sequence length="611" mass="69848">MSEVKRNISLRNSTNIFTSTFSLSSNNVPKPLIGESVIKYGDEAFVYGGRDALNAQLVNDMYVVDLNTCSWKQVEYQGNQKPIPRYFHSGDLWNNKLIFFGGMGFNDDTKCLYVLNDIDIYDIETKQWSHIPGMITENQTNDDAKEVNGSDVDEKSKHLYPSARYGHLHCVLDHYLIIFCGQDLSNSYIEEINIFDLDSGKWVFKSLFNHHCGIYRSNCVVINKDSEFLQMCRPINTTQDSNEHSIGSLFFYLNYNFVNVKRQVIYLELFELDTAESEKKSAALAKDNNQSFRFLELDVTEKFLSSAMPPGLRFPAVNILGDNLILSGIYLTSSRQAFVLWVYSLDKELWLQLDMLGVLNHGSWFKCLVLDCTNRFVVFGNKTRKLTQDYNLRQSNYDHIVFIELEGYGVYRKPQMGRVTERSEQLGKLLLNGISDMEILTIERMHIPCLSRMLYKRWPAFQKIMDRAVEKNQEAFQAEVSQLGPQLTDLPFSSIHSTGSRALYMPYSFETCSAFLHYIYCGTLNGSYCTAKNLCNLLILCKGFEGLETFFAYIVHLLHGVLNRNNVKLIYETAALTGAKGLQLRALRRIARIEQGGTAISPTSPLPNLDD</sequence>
<reference key="1">
    <citation type="journal article" date="1989" name="Mol. Cell. Biol.">
        <title>Characterization of the Schizosaccharomyces pombe ral2 gene implicated in activation of the ras1 gene product.</title>
        <authorList>
            <person name="Fukui Y."/>
            <person name="Miyake S."/>
            <person name="Satoh M."/>
            <person name="Yamamoto M."/>
        </authorList>
    </citation>
    <scope>NUCLEOTIDE SEQUENCE [GENOMIC DNA]</scope>
    <scope>FUNCTION</scope>
</reference>
<reference key="2">
    <citation type="journal article" date="2002" name="Nature">
        <title>The genome sequence of Schizosaccharomyces pombe.</title>
        <authorList>
            <person name="Wood V."/>
            <person name="Gwilliam R."/>
            <person name="Rajandream M.A."/>
            <person name="Lyne M.H."/>
            <person name="Lyne R."/>
            <person name="Stewart A."/>
            <person name="Sgouros J.G."/>
            <person name="Peat N."/>
            <person name="Hayles J."/>
            <person name="Baker S.G."/>
            <person name="Basham D."/>
            <person name="Bowman S."/>
            <person name="Brooks K."/>
            <person name="Brown D."/>
            <person name="Brown S."/>
            <person name="Chillingworth T."/>
            <person name="Churcher C.M."/>
            <person name="Collins M."/>
            <person name="Connor R."/>
            <person name="Cronin A."/>
            <person name="Davis P."/>
            <person name="Feltwell T."/>
            <person name="Fraser A."/>
            <person name="Gentles S."/>
            <person name="Goble A."/>
            <person name="Hamlin N."/>
            <person name="Harris D.E."/>
            <person name="Hidalgo J."/>
            <person name="Hodgson G."/>
            <person name="Holroyd S."/>
            <person name="Hornsby T."/>
            <person name="Howarth S."/>
            <person name="Huckle E.J."/>
            <person name="Hunt S."/>
            <person name="Jagels K."/>
            <person name="James K.D."/>
            <person name="Jones L."/>
            <person name="Jones M."/>
            <person name="Leather S."/>
            <person name="McDonald S."/>
            <person name="McLean J."/>
            <person name="Mooney P."/>
            <person name="Moule S."/>
            <person name="Mungall K.L."/>
            <person name="Murphy L.D."/>
            <person name="Niblett D."/>
            <person name="Odell C."/>
            <person name="Oliver K."/>
            <person name="O'Neil S."/>
            <person name="Pearson D."/>
            <person name="Quail M.A."/>
            <person name="Rabbinowitsch E."/>
            <person name="Rutherford K.M."/>
            <person name="Rutter S."/>
            <person name="Saunders D."/>
            <person name="Seeger K."/>
            <person name="Sharp S."/>
            <person name="Skelton J."/>
            <person name="Simmonds M.N."/>
            <person name="Squares R."/>
            <person name="Squares S."/>
            <person name="Stevens K."/>
            <person name="Taylor K."/>
            <person name="Taylor R.G."/>
            <person name="Tivey A."/>
            <person name="Walsh S.V."/>
            <person name="Warren T."/>
            <person name="Whitehead S."/>
            <person name="Woodward J.R."/>
            <person name="Volckaert G."/>
            <person name="Aert R."/>
            <person name="Robben J."/>
            <person name="Grymonprez B."/>
            <person name="Weltjens I."/>
            <person name="Vanstreels E."/>
            <person name="Rieger M."/>
            <person name="Schaefer M."/>
            <person name="Mueller-Auer S."/>
            <person name="Gabel C."/>
            <person name="Fuchs M."/>
            <person name="Duesterhoeft A."/>
            <person name="Fritzc C."/>
            <person name="Holzer E."/>
            <person name="Moestl D."/>
            <person name="Hilbert H."/>
            <person name="Borzym K."/>
            <person name="Langer I."/>
            <person name="Beck A."/>
            <person name="Lehrach H."/>
            <person name="Reinhardt R."/>
            <person name="Pohl T.M."/>
            <person name="Eger P."/>
            <person name="Zimmermann W."/>
            <person name="Wedler H."/>
            <person name="Wambutt R."/>
            <person name="Purnelle B."/>
            <person name="Goffeau A."/>
            <person name="Cadieu E."/>
            <person name="Dreano S."/>
            <person name="Gloux S."/>
            <person name="Lelaure V."/>
            <person name="Mottier S."/>
            <person name="Galibert F."/>
            <person name="Aves S.J."/>
            <person name="Xiang Z."/>
            <person name="Hunt C."/>
            <person name="Moore K."/>
            <person name="Hurst S.M."/>
            <person name="Lucas M."/>
            <person name="Rochet M."/>
            <person name="Gaillardin C."/>
            <person name="Tallada V.A."/>
            <person name="Garzon A."/>
            <person name="Thode G."/>
            <person name="Daga R.R."/>
            <person name="Cruzado L."/>
            <person name="Jimenez J."/>
            <person name="Sanchez M."/>
            <person name="del Rey F."/>
            <person name="Benito J."/>
            <person name="Dominguez A."/>
            <person name="Revuelta J.L."/>
            <person name="Moreno S."/>
            <person name="Armstrong J."/>
            <person name="Forsburg S.L."/>
            <person name="Cerutti L."/>
            <person name="Lowe T."/>
            <person name="McCombie W.R."/>
            <person name="Paulsen I."/>
            <person name="Potashkin J."/>
            <person name="Shpakovski G.V."/>
            <person name="Ussery D."/>
            <person name="Barrell B.G."/>
            <person name="Nurse P."/>
        </authorList>
    </citation>
    <scope>NUCLEOTIDE SEQUENCE [LARGE SCALE GENOMIC DNA]</scope>
    <source>
        <strain>972 / ATCC 24843</strain>
    </source>
</reference>
<reference key="3">
    <citation type="journal article" date="2008" name="J. Proteome Res.">
        <title>Phosphoproteome analysis of fission yeast.</title>
        <authorList>
            <person name="Wilson-Grady J.T."/>
            <person name="Villen J."/>
            <person name="Gygi S.P."/>
        </authorList>
    </citation>
    <scope>PHOSPHORYLATION [LARGE SCALE ANALYSIS] AT SER-604</scope>
    <scope>IDENTIFICATION BY MASS SPECTROMETRY</scope>
</reference>
<organism>
    <name type="scientific">Schizosaccharomyces pombe (strain 972 / ATCC 24843)</name>
    <name type="common">Fission yeast</name>
    <dbReference type="NCBI Taxonomy" id="284812"/>
    <lineage>
        <taxon>Eukaryota</taxon>
        <taxon>Fungi</taxon>
        <taxon>Dikarya</taxon>
        <taxon>Ascomycota</taxon>
        <taxon>Taphrinomycotina</taxon>
        <taxon>Schizosaccharomycetes</taxon>
        <taxon>Schizosaccharomycetales</taxon>
        <taxon>Schizosaccharomycetaceae</taxon>
        <taxon>Schizosaccharomyces</taxon>
    </lineage>
</organism>
<protein>
    <recommendedName>
        <fullName>Protein ral2</fullName>
    </recommendedName>
</protein>
<evidence type="ECO:0000269" key="1">
    <source>
    </source>
</evidence>
<evidence type="ECO:0000269" key="2">
    <source>
    </source>
</evidence>